<dbReference type="EMBL" id="AF134904">
    <property type="protein sequence ID" value="AAD30114.1"/>
    <property type="molecule type" value="mRNA"/>
</dbReference>
<dbReference type="SMR" id="Q9XZC8"/>
<dbReference type="GlyCosmos" id="Q9XZC8">
    <property type="glycosylation" value="9 sites, No reported glycans"/>
</dbReference>
<dbReference type="OrthoDB" id="9988752at2759"/>
<dbReference type="GO" id="GO:0005576">
    <property type="term" value="C:extracellular region"/>
    <property type="evidence" value="ECO:0007669"/>
    <property type="project" value="UniProtKB-SubCell"/>
</dbReference>
<dbReference type="GO" id="GO:0005886">
    <property type="term" value="C:plasma membrane"/>
    <property type="evidence" value="ECO:0007669"/>
    <property type="project" value="TreeGrafter"/>
</dbReference>
<dbReference type="GO" id="GO:0045499">
    <property type="term" value="F:chemorepellent activity"/>
    <property type="evidence" value="ECO:0007669"/>
    <property type="project" value="TreeGrafter"/>
</dbReference>
<dbReference type="GO" id="GO:0030215">
    <property type="term" value="F:semaphorin receptor binding"/>
    <property type="evidence" value="ECO:0007669"/>
    <property type="project" value="InterPro"/>
</dbReference>
<dbReference type="GO" id="GO:0007411">
    <property type="term" value="P:axon guidance"/>
    <property type="evidence" value="ECO:0007669"/>
    <property type="project" value="TreeGrafter"/>
</dbReference>
<dbReference type="GO" id="GO:0030335">
    <property type="term" value="P:positive regulation of cell migration"/>
    <property type="evidence" value="ECO:0007669"/>
    <property type="project" value="TreeGrafter"/>
</dbReference>
<dbReference type="GO" id="GO:0071526">
    <property type="term" value="P:semaphorin-plexin signaling pathway"/>
    <property type="evidence" value="ECO:0007669"/>
    <property type="project" value="TreeGrafter"/>
</dbReference>
<dbReference type="CDD" id="cd11238">
    <property type="entry name" value="Sema_2A"/>
    <property type="match status" value="1"/>
</dbReference>
<dbReference type="FunFam" id="2.130.10.10:FF:000369">
    <property type="entry name" value="semaphorin-2A isoform X1"/>
    <property type="match status" value="1"/>
</dbReference>
<dbReference type="Gene3D" id="3.30.1680.10">
    <property type="entry name" value="ligand-binding face of the semaphorins, domain 2"/>
    <property type="match status" value="1"/>
</dbReference>
<dbReference type="Gene3D" id="2.130.10.10">
    <property type="entry name" value="YVTN repeat-like/Quinoprotein amine dehydrogenase"/>
    <property type="match status" value="1"/>
</dbReference>
<dbReference type="InterPro" id="IPR007110">
    <property type="entry name" value="Ig-like_dom"/>
</dbReference>
<dbReference type="InterPro" id="IPR036179">
    <property type="entry name" value="Ig-like_dom_sf"/>
</dbReference>
<dbReference type="InterPro" id="IPR001627">
    <property type="entry name" value="Semap_dom"/>
</dbReference>
<dbReference type="InterPro" id="IPR036352">
    <property type="entry name" value="Semap_dom_sf"/>
</dbReference>
<dbReference type="InterPro" id="IPR027231">
    <property type="entry name" value="Semaphorin"/>
</dbReference>
<dbReference type="InterPro" id="IPR015943">
    <property type="entry name" value="WD40/YVTN_repeat-like_dom_sf"/>
</dbReference>
<dbReference type="PANTHER" id="PTHR11036">
    <property type="entry name" value="SEMAPHORIN"/>
    <property type="match status" value="1"/>
</dbReference>
<dbReference type="PANTHER" id="PTHR11036:SF90">
    <property type="entry name" value="SEMAPHORIN 2B, ISOFORM D-RELATED"/>
    <property type="match status" value="1"/>
</dbReference>
<dbReference type="Pfam" id="PF01403">
    <property type="entry name" value="Sema"/>
    <property type="match status" value="1"/>
</dbReference>
<dbReference type="SMART" id="SM00630">
    <property type="entry name" value="Sema"/>
    <property type="match status" value="1"/>
</dbReference>
<dbReference type="SUPFAM" id="SSF48726">
    <property type="entry name" value="Immunoglobulin"/>
    <property type="match status" value="1"/>
</dbReference>
<dbReference type="SUPFAM" id="SSF103575">
    <property type="entry name" value="Plexin repeat"/>
    <property type="match status" value="1"/>
</dbReference>
<dbReference type="SUPFAM" id="SSF101912">
    <property type="entry name" value="Sema domain"/>
    <property type="match status" value="1"/>
</dbReference>
<dbReference type="PROSITE" id="PS50835">
    <property type="entry name" value="IG_LIKE"/>
    <property type="match status" value="1"/>
</dbReference>
<dbReference type="PROSITE" id="PS51004">
    <property type="entry name" value="SEMA"/>
    <property type="match status" value="1"/>
</dbReference>
<keyword id="KW-0217">Developmental protein</keyword>
<keyword id="KW-0221">Differentiation</keyword>
<keyword id="KW-1015">Disulfide bond</keyword>
<keyword id="KW-0325">Glycoprotein</keyword>
<keyword id="KW-0393">Immunoglobulin domain</keyword>
<keyword id="KW-0524">Neurogenesis</keyword>
<keyword id="KW-0964">Secreted</keyword>
<keyword id="KW-0732">Signal</keyword>
<sequence>MAAKLWNLLLVAASVHLVGSVEQLHQDLIHEFSCGHKYYRTFHLDEKRESLYVGALDKVYKLNLTNISLSDCERDSLTLEPTNIANCVSKGKSADFDCKNHIRVIQPMGDGSRLYICGTNAHSPKDWVVYSNLTHLQRHEYVPGIGVGIAKCPFDPEDSSTAVWVENGNPGDLPGLYSGTNAEFTKADTVIFRTDLYNLTTGRREYSFKRTLKYDSKWLDNPNFVGSFDVGEYVLFFFRETAVEYINCGKSVYSRVARVCKKDVGGKNILSQNWATFLKARLNCSIPGEFPFYFNEIQGVYKMPNTDKFFGVFSTSVTGLTGSAICSFTLKDIQEVFSGKFKEQATSSSAWLPVLPSRVPDPRPGECVNDTELLPDTVLNFIRSHPLMDGAVSHEGGKPVFYKRDVLFTQLVVDKLKVNLVGKNMEYIVYYAGTSTGQVYKVVQWYDSGGLPQSLLVDIFDVTPPEPVQALHLSKEYKSLYAASDNIVRQIELVMCHHRYSNCLQCARDPYCGWDRDSNSCKSYTPGLLQDVTNTSANLCEHSVMKKKLIVTWGQSIHLGCFLKVPEVLSSQTISWVHYTKDKGRYPIVYRPDKYIETSEHGLVLISVTDSDSGRYDCWLGGSLLCSYNITVDAHRCSAPGRSNDYQKIYSDWCHEFERSKIAMKTWERKQAQCSTKQNNSNQKTHPNDIFHSNPVA</sequence>
<protein>
    <recommendedName>
        <fullName>Semaphorin-2A</fullName>
        <shortName>Sema-2A</shortName>
    </recommendedName>
    <alternativeName>
        <fullName>Sema II</fullName>
    </alternativeName>
</protein>
<evidence type="ECO:0000250" key="1"/>
<evidence type="ECO:0000255" key="2"/>
<evidence type="ECO:0000255" key="3">
    <source>
        <dbReference type="PROSITE-ProRule" id="PRU00352"/>
    </source>
</evidence>
<evidence type="ECO:0000256" key="4">
    <source>
        <dbReference type="SAM" id="MobiDB-lite"/>
    </source>
</evidence>
<evidence type="ECO:0000305" key="5"/>
<accession>Q9XZC8</accession>
<gene>
    <name type="primary">SEMA-2A</name>
</gene>
<reference key="1">
    <citation type="journal article" date="1999" name="Development">
        <title>Discrete roles for secreted and transmembrane semaphorins in neuronal growth cone guidance in vivo.</title>
        <authorList>
            <person name="Isbister C.M."/>
            <person name="Tsai A."/>
            <person name="Wong S.T."/>
            <person name="Kolodkin A.L."/>
            <person name="O'Connor T.P."/>
        </authorList>
    </citation>
    <scope>NUCLEOTIDE SEQUENCE [MRNA]</scope>
    <source>
        <tissue>Embryo</tissue>
    </source>
</reference>
<organism>
    <name type="scientific">Schistocerca gregaria</name>
    <name type="common">Desert locust</name>
    <name type="synonym">Gryllus gregarius</name>
    <dbReference type="NCBI Taxonomy" id="7010"/>
    <lineage>
        <taxon>Eukaryota</taxon>
        <taxon>Metazoa</taxon>
        <taxon>Ecdysozoa</taxon>
        <taxon>Arthropoda</taxon>
        <taxon>Hexapoda</taxon>
        <taxon>Insecta</taxon>
        <taxon>Pterygota</taxon>
        <taxon>Neoptera</taxon>
        <taxon>Polyneoptera</taxon>
        <taxon>Orthoptera</taxon>
        <taxon>Caelifera</taxon>
        <taxon>Acrididea</taxon>
        <taxon>Acridomorpha</taxon>
        <taxon>Acridoidea</taxon>
        <taxon>Acrididae</taxon>
        <taxon>Cyrtacanthacridinae</taxon>
        <taxon>Schistocerca</taxon>
    </lineage>
</organism>
<feature type="signal peptide" evidence="2">
    <location>
        <begin position="1"/>
        <end position="20"/>
    </location>
</feature>
<feature type="chain" id="PRO_0000032302" description="Semaphorin-2A">
    <location>
        <begin position="21"/>
        <end position="697"/>
    </location>
</feature>
<feature type="domain" description="Sema" evidence="3">
    <location>
        <begin position="21"/>
        <end position="493"/>
    </location>
</feature>
<feature type="domain" description="Ig-like C2-type">
    <location>
        <begin position="526"/>
        <end position="634"/>
    </location>
</feature>
<feature type="region of interest" description="Disordered" evidence="4">
    <location>
        <begin position="673"/>
        <end position="697"/>
    </location>
</feature>
<feature type="compositionally biased region" description="Polar residues" evidence="4">
    <location>
        <begin position="673"/>
        <end position="685"/>
    </location>
</feature>
<feature type="glycosylation site" description="N-linked (GlcNAc...) asparagine" evidence="2">
    <location>
        <position position="63"/>
    </location>
</feature>
<feature type="glycosylation site" description="N-linked (GlcNAc...) asparagine" evidence="2">
    <location>
        <position position="66"/>
    </location>
</feature>
<feature type="glycosylation site" description="N-linked (GlcNAc...) asparagine" evidence="2">
    <location>
        <position position="132"/>
    </location>
</feature>
<feature type="glycosylation site" description="N-linked (GlcNAc...) asparagine" evidence="2">
    <location>
        <position position="198"/>
    </location>
</feature>
<feature type="glycosylation site" description="N-linked (GlcNAc...) asparagine" evidence="2">
    <location>
        <position position="283"/>
    </location>
</feature>
<feature type="glycosylation site" description="N-linked (GlcNAc...) asparagine" evidence="2">
    <location>
        <position position="369"/>
    </location>
</feature>
<feature type="glycosylation site" description="N-linked (GlcNAc...) asparagine" evidence="2">
    <location>
        <position position="534"/>
    </location>
</feature>
<feature type="glycosylation site" description="N-linked (GlcNAc...) asparagine" evidence="2">
    <location>
        <position position="629"/>
    </location>
</feature>
<feature type="glycosylation site" description="N-linked (GlcNAc...) asparagine" evidence="2">
    <location>
        <position position="679"/>
    </location>
</feature>
<feature type="disulfide bond" evidence="1">
    <location>
        <begin position="87"/>
        <end position="98"/>
    </location>
</feature>
<feature type="disulfide bond" evidence="1">
    <location>
        <begin position="260"/>
        <end position="367"/>
    </location>
</feature>
<feature type="disulfide bond" evidence="1">
    <location>
        <begin position="284"/>
        <end position="326"/>
    </location>
</feature>
<feature type="disulfide bond" evidence="1">
    <location>
        <begin position="496"/>
        <end position="512"/>
    </location>
</feature>
<feature type="disulfide bond" evidence="1">
    <location>
        <begin position="506"/>
        <end position="521"/>
    </location>
</feature>
<feature type="disulfide bond" evidence="1">
    <location>
        <begin position="618"/>
        <end position="654"/>
    </location>
</feature>
<comment type="function">
    <text>Acts as a chemorepulsive guidance molecule critical for axon fasciculation and for determining both the initial direction and subsequent pathfinding events of the Ti axon projection.</text>
</comment>
<comment type="subcellular location">
    <subcellularLocation>
        <location evidence="5">Secreted</location>
    </subcellularLocation>
</comment>
<comment type="tissue specificity">
    <text>Expressed in a gradient in the developing limb bud epithelium during Ti pioneer axon outgrowth.</text>
</comment>
<comment type="similarity">
    <text evidence="5">Belongs to the semaphorin family.</text>
</comment>
<name>SEM2A_SCHGR</name>
<proteinExistence type="evidence at transcript level"/>